<accession>B1Y7M8</accession>
<evidence type="ECO:0000255" key="1">
    <source>
        <dbReference type="HAMAP-Rule" id="MF_01368"/>
    </source>
</evidence>
<evidence type="ECO:0000305" key="2"/>
<proteinExistence type="inferred from homology"/>
<organism>
    <name type="scientific">Leptothrix cholodnii (strain ATCC 51168 / LMG 8142 / SP-6)</name>
    <name type="common">Leptothrix discophora (strain SP-6)</name>
    <dbReference type="NCBI Taxonomy" id="395495"/>
    <lineage>
        <taxon>Bacteria</taxon>
        <taxon>Pseudomonadati</taxon>
        <taxon>Pseudomonadota</taxon>
        <taxon>Betaproteobacteria</taxon>
        <taxon>Burkholderiales</taxon>
        <taxon>Sphaerotilaceae</taxon>
        <taxon>Leptothrix</taxon>
    </lineage>
</organism>
<feature type="chain" id="PRO_1000144443" description="Large ribosomal subunit protein bL17">
    <location>
        <begin position="1"/>
        <end position="132"/>
    </location>
</feature>
<gene>
    <name evidence="1" type="primary">rplQ</name>
    <name type="ordered locus">Lcho_3922</name>
</gene>
<keyword id="KW-1185">Reference proteome</keyword>
<keyword id="KW-0687">Ribonucleoprotein</keyword>
<keyword id="KW-0689">Ribosomal protein</keyword>
<reference key="1">
    <citation type="submission" date="2008-03" db="EMBL/GenBank/DDBJ databases">
        <title>Complete sequence of Leptothrix cholodnii SP-6.</title>
        <authorList>
            <consortium name="US DOE Joint Genome Institute"/>
            <person name="Copeland A."/>
            <person name="Lucas S."/>
            <person name="Lapidus A."/>
            <person name="Glavina del Rio T."/>
            <person name="Dalin E."/>
            <person name="Tice H."/>
            <person name="Bruce D."/>
            <person name="Goodwin L."/>
            <person name="Pitluck S."/>
            <person name="Chertkov O."/>
            <person name="Brettin T."/>
            <person name="Detter J.C."/>
            <person name="Han C."/>
            <person name="Kuske C.R."/>
            <person name="Schmutz J."/>
            <person name="Larimer F."/>
            <person name="Land M."/>
            <person name="Hauser L."/>
            <person name="Kyrpides N."/>
            <person name="Lykidis A."/>
            <person name="Emerson D."/>
            <person name="Richardson P."/>
        </authorList>
    </citation>
    <scope>NUCLEOTIDE SEQUENCE [LARGE SCALE GENOMIC DNA]</scope>
    <source>
        <strain>ATCC 51168 / LMG 8142 / SP-6</strain>
    </source>
</reference>
<dbReference type="EMBL" id="CP001013">
    <property type="protein sequence ID" value="ACB36176.1"/>
    <property type="molecule type" value="Genomic_DNA"/>
</dbReference>
<dbReference type="RefSeq" id="WP_012348922.1">
    <property type="nucleotide sequence ID" value="NC_010524.1"/>
</dbReference>
<dbReference type="SMR" id="B1Y7M8"/>
<dbReference type="STRING" id="395495.Lcho_3922"/>
<dbReference type="KEGG" id="lch:Lcho_3922"/>
<dbReference type="eggNOG" id="COG0203">
    <property type="taxonomic scope" value="Bacteria"/>
</dbReference>
<dbReference type="HOGENOM" id="CLU_074407_2_0_4"/>
<dbReference type="OrthoDB" id="9809073at2"/>
<dbReference type="Proteomes" id="UP000001693">
    <property type="component" value="Chromosome"/>
</dbReference>
<dbReference type="GO" id="GO:0022625">
    <property type="term" value="C:cytosolic large ribosomal subunit"/>
    <property type="evidence" value="ECO:0007669"/>
    <property type="project" value="TreeGrafter"/>
</dbReference>
<dbReference type="GO" id="GO:0003735">
    <property type="term" value="F:structural constituent of ribosome"/>
    <property type="evidence" value="ECO:0007669"/>
    <property type="project" value="InterPro"/>
</dbReference>
<dbReference type="GO" id="GO:0006412">
    <property type="term" value="P:translation"/>
    <property type="evidence" value="ECO:0007669"/>
    <property type="project" value="UniProtKB-UniRule"/>
</dbReference>
<dbReference type="FunFam" id="3.90.1030.10:FF:000001">
    <property type="entry name" value="50S ribosomal protein L17"/>
    <property type="match status" value="1"/>
</dbReference>
<dbReference type="Gene3D" id="3.90.1030.10">
    <property type="entry name" value="Ribosomal protein L17"/>
    <property type="match status" value="1"/>
</dbReference>
<dbReference type="HAMAP" id="MF_01368">
    <property type="entry name" value="Ribosomal_bL17"/>
    <property type="match status" value="1"/>
</dbReference>
<dbReference type="InterPro" id="IPR000456">
    <property type="entry name" value="Ribosomal_bL17"/>
</dbReference>
<dbReference type="InterPro" id="IPR047859">
    <property type="entry name" value="Ribosomal_bL17_CS"/>
</dbReference>
<dbReference type="InterPro" id="IPR036373">
    <property type="entry name" value="Ribosomal_bL17_sf"/>
</dbReference>
<dbReference type="NCBIfam" id="TIGR00059">
    <property type="entry name" value="L17"/>
    <property type="match status" value="1"/>
</dbReference>
<dbReference type="PANTHER" id="PTHR14413:SF16">
    <property type="entry name" value="LARGE RIBOSOMAL SUBUNIT PROTEIN BL17M"/>
    <property type="match status" value="1"/>
</dbReference>
<dbReference type="PANTHER" id="PTHR14413">
    <property type="entry name" value="RIBOSOMAL PROTEIN L17"/>
    <property type="match status" value="1"/>
</dbReference>
<dbReference type="Pfam" id="PF01196">
    <property type="entry name" value="Ribosomal_L17"/>
    <property type="match status" value="1"/>
</dbReference>
<dbReference type="SUPFAM" id="SSF64263">
    <property type="entry name" value="Prokaryotic ribosomal protein L17"/>
    <property type="match status" value="1"/>
</dbReference>
<dbReference type="PROSITE" id="PS01167">
    <property type="entry name" value="RIBOSOMAL_L17"/>
    <property type="match status" value="1"/>
</dbReference>
<sequence length="132" mass="14863">MRHGNGLRKLNRTSSHRLAMLRNMCNSLIQHEAIKTTVPKAKELRRVVERLLTLGKTPTLANKRLAFDRLRDRDNVVKLFGVLGPRYAARPGGYTRILKMGFRVGDNAPMAFVELVDRPDPSAAVEVTEDKA</sequence>
<protein>
    <recommendedName>
        <fullName evidence="1">Large ribosomal subunit protein bL17</fullName>
    </recommendedName>
    <alternativeName>
        <fullName evidence="2">50S ribosomal protein L17</fullName>
    </alternativeName>
</protein>
<name>RL17_LEPCP</name>
<comment type="subunit">
    <text evidence="1">Part of the 50S ribosomal subunit. Contacts protein L32.</text>
</comment>
<comment type="similarity">
    <text evidence="1">Belongs to the bacterial ribosomal protein bL17 family.</text>
</comment>